<gene>
    <name type="primary">HSPA1B</name>
    <name type="synonym">HSP70-2</name>
</gene>
<feature type="initiator methionine" description="Removed" evidence="2">
    <location>
        <position position="1"/>
    </location>
</feature>
<feature type="chain" id="PRO_0000078246" description="Heat shock 70 kDa protein 1B">
    <location>
        <begin position="2"/>
        <end position="641"/>
    </location>
</feature>
<feature type="region of interest" description="Nucleotide-binding domain (NBD)" evidence="3">
    <location>
        <begin position="2"/>
        <end position="386"/>
    </location>
</feature>
<feature type="region of interest" description="Substrate-binding domain (SBD)" evidence="3">
    <location>
        <begin position="394"/>
        <end position="509"/>
    </location>
</feature>
<feature type="region of interest" description="Disordered" evidence="4">
    <location>
        <begin position="617"/>
        <end position="641"/>
    </location>
</feature>
<feature type="compositionally biased region" description="Gly residues" evidence="4">
    <location>
        <begin position="617"/>
        <end position="633"/>
    </location>
</feature>
<feature type="binding site" evidence="1">
    <location>
        <begin position="12"/>
        <end position="15"/>
    </location>
    <ligand>
        <name>ATP</name>
        <dbReference type="ChEBI" id="CHEBI:30616"/>
    </ligand>
</feature>
<feature type="binding site" evidence="1">
    <location>
        <position position="71"/>
    </location>
    <ligand>
        <name>ATP</name>
        <dbReference type="ChEBI" id="CHEBI:30616"/>
    </ligand>
</feature>
<feature type="binding site" evidence="1">
    <location>
        <begin position="202"/>
        <end position="204"/>
    </location>
    <ligand>
        <name>ATP</name>
        <dbReference type="ChEBI" id="CHEBI:30616"/>
    </ligand>
</feature>
<feature type="binding site" evidence="1">
    <location>
        <begin position="268"/>
        <end position="275"/>
    </location>
    <ligand>
        <name>ATP</name>
        <dbReference type="ChEBI" id="CHEBI:30616"/>
    </ligand>
</feature>
<feature type="binding site" evidence="1">
    <location>
        <begin position="339"/>
        <end position="342"/>
    </location>
    <ligand>
        <name>ATP</name>
        <dbReference type="ChEBI" id="CHEBI:30616"/>
    </ligand>
</feature>
<feature type="modified residue" description="N-acetylalanine" evidence="2">
    <location>
        <position position="2"/>
    </location>
</feature>
<feature type="modified residue" description="N6-acetyllysine" evidence="2">
    <location>
        <position position="77"/>
    </location>
</feature>
<feature type="modified residue" description="N6-acetyllysine" evidence="2">
    <location>
        <position position="108"/>
    </location>
</feature>
<feature type="modified residue" description="N6-acetyllysine" evidence="2">
    <location>
        <position position="246"/>
    </location>
</feature>
<feature type="modified residue" description="N6-acetyllysine" evidence="2">
    <location>
        <position position="348"/>
    </location>
</feature>
<feature type="modified residue" description="Omega-N-methylarginine" evidence="2">
    <location>
        <position position="469"/>
    </location>
</feature>
<feature type="modified residue" description="N6,N6,N6-trimethyllysine; by METTL21A; in vitro" evidence="2">
    <location>
        <position position="561"/>
    </location>
</feature>
<feature type="modified residue" description="N6,N6-dimethyllysine" evidence="2">
    <location>
        <position position="561"/>
    </location>
</feature>
<feature type="modified residue" description="Phosphoserine" evidence="2">
    <location>
        <position position="631"/>
    </location>
</feature>
<feature type="modified residue" description="Phosphoserine" evidence="2">
    <location>
        <position position="633"/>
    </location>
</feature>
<feature type="modified residue" description="Phosphothreonine" evidence="2">
    <location>
        <position position="636"/>
    </location>
</feature>
<feature type="sequence conflict" description="In Ref. 3; AAI03084." evidence="5" ref="3">
    <original>T</original>
    <variation>M</variation>
    <location>
        <position position="5"/>
    </location>
</feature>
<feature type="sequence conflict" description="In Ref. 3; AAI03084." evidence="5" ref="3">
    <original>A</original>
    <variation>T</variation>
    <location>
        <position position="182"/>
    </location>
</feature>
<accession>Q27965</accession>
<accession>Q28122</accession>
<accession>Q3ZBV7</accession>
<reference key="1">
    <citation type="submission" date="1994-01" db="EMBL/GenBank/DDBJ databases">
        <title>Partial and complete sequences of bovine HSP70-1 and HSP70-2 genes.</title>
        <authorList>
            <person name="Grosz M.D."/>
            <person name="Skow L.C."/>
        </authorList>
    </citation>
    <scope>NUCLEOTIDE SEQUENCE [GENOMIC DNA]</scope>
    <source>
        <strain>Angus</strain>
    </source>
</reference>
<reference key="2">
    <citation type="journal article" date="2003" name="Anim. Genet.">
        <title>Deletion of one of the duplicated Hsp70 genes causes hereditary myopathy of diaphragmatic muscles in Holstein-Friesian cattle.</title>
        <authorList>
            <person name="Sugimoto M."/>
            <person name="Furuoka H."/>
            <person name="Sugimoto Y."/>
        </authorList>
    </citation>
    <scope>NUCLEOTIDE SEQUENCE [GENOMIC DNA]</scope>
    <source>
        <strain>Holstein-Friesian</strain>
    </source>
</reference>
<reference key="3">
    <citation type="submission" date="2005-08" db="EMBL/GenBank/DDBJ databases">
        <authorList>
            <consortium name="NIH - Mammalian Gene Collection (MGC) project"/>
        </authorList>
    </citation>
    <scope>NUCLEOTIDE SEQUENCE [LARGE SCALE MRNA]</scope>
    <source>
        <strain>Crossbred X Angus</strain>
        <tissue>Ileum</tissue>
    </source>
</reference>
<reference key="4">
    <citation type="journal article" date="1993" name="Vaccine">
        <title>Heat-shock promoter-driven synthesis of secreted bovine herpesvirus glycoproteins in transfected cells.</title>
        <authorList>
            <person name="Kowalski J."/>
            <person name="Gilbert S.A."/>
            <person name="van Drunen-Littel-Van den Hurk S."/>
            <person name="van den Hurk J."/>
            <person name="Babiuk L.A."/>
            <person name="Zamb T.J."/>
        </authorList>
    </citation>
    <scope>NUCLEOTIDE SEQUENCE [GENOMIC DNA] OF 1-28</scope>
    <source>
        <tissue>Liver</tissue>
    </source>
</reference>
<sequence>MAKNTAIGIDLGTTYSCVGVFQHGKVEIIANDQGNRTTPSYVAFTDTERLIGDAAKNQVALNPQNTVFDAKRLIGRKFGDPVVQSDMKHWPFRVINDGDKPKVQVSYKGETKAFYPEEISSMVLTKMKEIAEAYLGHPVTNAVITVPAYFNDSQRQATKDAGVIAGLNVLRIINEPTAAAIAYGLDRTGKGERNVLIFDLGGGTFDVSILTIDDGIFEVKATAGDTHLGGEDFDNRLVNHFVEEFKRKHKKDISQNKRAVRRLRTACERAKRTLSSSTQASLEIDSLFEGIDFYTSITRARFEELCSDLFRSTLEPVEKALRDAKLDKAQIHDLVLVGGSTRIPKVQKLLQDFFNGRDLNKSINPDEAVAYGAAVQAAILMGDKSENVQDLLLLDVAPLSLGLETAGGVMTALIKRNSTIPTKQTQIFTTYSDNQPGVLIQVYEGERAMTRDNNLLGRFELSGIPPAPRGVPQIEVTFDIDANGILNVTATDKSTGKANKITITNDKGRLSKEEIERMVQEAEKYKAEDEVQRERVSAKNALESYAFNMKSAVEDEGLKGKISEADKKKVLDKCQEVISWLDANTLAEKDEFEHKRKELEQVCNPIISRLYQGAGGPGAGGFGAQGPKGGSGSGPTIEEVD</sequence>
<organism>
    <name type="scientific">Bos taurus</name>
    <name type="common">Bovine</name>
    <dbReference type="NCBI Taxonomy" id="9913"/>
    <lineage>
        <taxon>Eukaryota</taxon>
        <taxon>Metazoa</taxon>
        <taxon>Chordata</taxon>
        <taxon>Craniata</taxon>
        <taxon>Vertebrata</taxon>
        <taxon>Euteleostomi</taxon>
        <taxon>Mammalia</taxon>
        <taxon>Eutheria</taxon>
        <taxon>Laurasiatheria</taxon>
        <taxon>Artiodactyla</taxon>
        <taxon>Ruminantia</taxon>
        <taxon>Pecora</taxon>
        <taxon>Bovidae</taxon>
        <taxon>Bovinae</taxon>
        <taxon>Bos</taxon>
    </lineage>
</organism>
<evidence type="ECO:0000250" key="1"/>
<evidence type="ECO:0000250" key="2">
    <source>
        <dbReference type="UniProtKB" id="P0DMV9"/>
    </source>
</evidence>
<evidence type="ECO:0000250" key="3">
    <source>
        <dbReference type="UniProtKB" id="P11142"/>
    </source>
</evidence>
<evidence type="ECO:0000256" key="4">
    <source>
        <dbReference type="SAM" id="MobiDB-lite"/>
    </source>
</evidence>
<evidence type="ECO:0000305" key="5"/>
<protein>
    <recommendedName>
        <fullName>Heat shock 70 kDa protein 1B</fullName>
    </recommendedName>
    <alternativeName>
        <fullName>Heat shock 70 kDa protein 2</fullName>
        <shortName>HSP70.2</shortName>
    </alternativeName>
</protein>
<keyword id="KW-0007">Acetylation</keyword>
<keyword id="KW-0067">ATP-binding</keyword>
<keyword id="KW-0143">Chaperone</keyword>
<keyword id="KW-0963">Cytoplasm</keyword>
<keyword id="KW-0206">Cytoskeleton</keyword>
<keyword id="KW-0488">Methylation</keyword>
<keyword id="KW-0547">Nucleotide-binding</keyword>
<keyword id="KW-0597">Phosphoprotein</keyword>
<keyword id="KW-1185">Reference proteome</keyword>
<keyword id="KW-0346">Stress response</keyword>
<proteinExistence type="evidence at transcript level"/>
<dbReference type="EMBL" id="U02892">
    <property type="protein sequence ID" value="AAA03451.1"/>
    <property type="molecule type" value="Genomic_DNA"/>
</dbReference>
<dbReference type="EMBL" id="AY149618">
    <property type="protein sequence ID" value="AAN78093.1"/>
    <property type="molecule type" value="Genomic_DNA"/>
</dbReference>
<dbReference type="EMBL" id="BC103083">
    <property type="protein sequence ID" value="AAI03084.1"/>
    <property type="molecule type" value="mRNA"/>
</dbReference>
<dbReference type="EMBL" id="M98823">
    <property type="protein sequence ID" value="AAA30568.1"/>
    <property type="molecule type" value="Genomic_DNA"/>
</dbReference>
<dbReference type="PIR" id="I45911">
    <property type="entry name" value="I45911"/>
</dbReference>
<dbReference type="RefSeq" id="NP_976067.2">
    <property type="nucleotide sequence ID" value="NM_203322.2"/>
</dbReference>
<dbReference type="BMRB" id="Q27965"/>
<dbReference type="SMR" id="Q27965"/>
<dbReference type="FunCoup" id="Q27965">
    <property type="interactions" value="1728"/>
</dbReference>
<dbReference type="PeptideAtlas" id="Q27965"/>
<dbReference type="GeneID" id="282254"/>
<dbReference type="KEGG" id="bta:282254"/>
<dbReference type="CTD" id="3303"/>
<dbReference type="InParanoid" id="Q27965"/>
<dbReference type="OrthoDB" id="2401965at2759"/>
<dbReference type="PRO" id="PR:Q27965"/>
<dbReference type="Proteomes" id="UP000009136">
    <property type="component" value="Unplaced"/>
</dbReference>
<dbReference type="GO" id="GO:0005813">
    <property type="term" value="C:centrosome"/>
    <property type="evidence" value="ECO:0000250"/>
    <property type="project" value="UniProtKB"/>
</dbReference>
<dbReference type="GO" id="GO:0005737">
    <property type="term" value="C:cytoplasm"/>
    <property type="evidence" value="ECO:0000318"/>
    <property type="project" value="GO_Central"/>
</dbReference>
<dbReference type="GO" id="GO:0005829">
    <property type="term" value="C:cytosol"/>
    <property type="evidence" value="ECO:0000318"/>
    <property type="project" value="GO_Central"/>
</dbReference>
<dbReference type="GO" id="GO:0005634">
    <property type="term" value="C:nucleus"/>
    <property type="evidence" value="ECO:0000318"/>
    <property type="project" value="GO_Central"/>
</dbReference>
<dbReference type="GO" id="GO:0005886">
    <property type="term" value="C:plasma membrane"/>
    <property type="evidence" value="ECO:0000318"/>
    <property type="project" value="GO_Central"/>
</dbReference>
<dbReference type="GO" id="GO:0005524">
    <property type="term" value="F:ATP binding"/>
    <property type="evidence" value="ECO:0007669"/>
    <property type="project" value="UniProtKB-KW"/>
</dbReference>
<dbReference type="GO" id="GO:0016887">
    <property type="term" value="F:ATP hydrolysis activity"/>
    <property type="evidence" value="ECO:0000318"/>
    <property type="project" value="GO_Central"/>
</dbReference>
<dbReference type="GO" id="GO:0140662">
    <property type="term" value="F:ATP-dependent protein folding chaperone"/>
    <property type="evidence" value="ECO:0007669"/>
    <property type="project" value="InterPro"/>
</dbReference>
<dbReference type="GO" id="GO:0031072">
    <property type="term" value="F:heat shock protein binding"/>
    <property type="evidence" value="ECO:0000318"/>
    <property type="project" value="GO_Central"/>
</dbReference>
<dbReference type="GO" id="GO:0044183">
    <property type="term" value="F:protein folding chaperone"/>
    <property type="evidence" value="ECO:0000318"/>
    <property type="project" value="GO_Central"/>
</dbReference>
<dbReference type="GO" id="GO:0051085">
    <property type="term" value="P:chaperone cofactor-dependent protein refolding"/>
    <property type="evidence" value="ECO:0000318"/>
    <property type="project" value="GO_Central"/>
</dbReference>
<dbReference type="GO" id="GO:0090063">
    <property type="term" value="P:positive regulation of microtubule nucleation"/>
    <property type="evidence" value="ECO:0000250"/>
    <property type="project" value="UniProtKB"/>
</dbReference>
<dbReference type="GO" id="GO:0032436">
    <property type="term" value="P:positive regulation of proteasomal ubiquitin-dependent protein catabolic process"/>
    <property type="evidence" value="ECO:0000318"/>
    <property type="project" value="GO_Central"/>
</dbReference>
<dbReference type="GO" id="GO:0042026">
    <property type="term" value="P:protein refolding"/>
    <property type="evidence" value="ECO:0000250"/>
    <property type="project" value="UniProtKB"/>
</dbReference>
<dbReference type="GO" id="GO:1901673">
    <property type="term" value="P:regulation of mitotic spindle assembly"/>
    <property type="evidence" value="ECO:0000250"/>
    <property type="project" value="UniProtKB"/>
</dbReference>
<dbReference type="CDD" id="cd10233">
    <property type="entry name" value="ASKHA_NBD_HSP70_HSPA1"/>
    <property type="match status" value="1"/>
</dbReference>
<dbReference type="FunFam" id="2.60.34.10:FF:000002">
    <property type="entry name" value="Heat shock 70 kDa"/>
    <property type="match status" value="1"/>
</dbReference>
<dbReference type="FunFam" id="3.30.420.40:FF:000172">
    <property type="entry name" value="Heat shock 70 kDa protein"/>
    <property type="match status" value="1"/>
</dbReference>
<dbReference type="FunFam" id="3.30.30.30:FF:000001">
    <property type="entry name" value="heat shock 70 kDa protein-like"/>
    <property type="match status" value="1"/>
</dbReference>
<dbReference type="FunFam" id="3.30.420.40:FF:000028">
    <property type="entry name" value="heat shock 70 kDa protein-like"/>
    <property type="match status" value="1"/>
</dbReference>
<dbReference type="FunFam" id="3.30.420.40:FF:000135">
    <property type="entry name" value="Heat shock cognate 71 kDa protein"/>
    <property type="match status" value="1"/>
</dbReference>
<dbReference type="FunFam" id="3.90.640.10:FF:000134">
    <property type="entry name" value="Heat shock cognate 71 kDa protein"/>
    <property type="match status" value="1"/>
</dbReference>
<dbReference type="FunFam" id="1.20.1270.10:FF:000003">
    <property type="entry name" value="heat shock cognate 71 kDa protein-like"/>
    <property type="match status" value="1"/>
</dbReference>
<dbReference type="FunFam" id="3.30.420.40:FF:000026">
    <property type="entry name" value="Heat shock protein 70"/>
    <property type="match status" value="1"/>
</dbReference>
<dbReference type="Gene3D" id="1.20.1270.10">
    <property type="match status" value="1"/>
</dbReference>
<dbReference type="Gene3D" id="3.30.30.30">
    <property type="match status" value="1"/>
</dbReference>
<dbReference type="Gene3D" id="3.30.420.40">
    <property type="match status" value="2"/>
</dbReference>
<dbReference type="Gene3D" id="3.90.640.10">
    <property type="entry name" value="Actin, Chain A, domain 4"/>
    <property type="match status" value="1"/>
</dbReference>
<dbReference type="Gene3D" id="2.60.34.10">
    <property type="entry name" value="Substrate Binding Domain Of DNAk, Chain A, domain 1"/>
    <property type="match status" value="1"/>
</dbReference>
<dbReference type="InterPro" id="IPR043129">
    <property type="entry name" value="ATPase_NBD"/>
</dbReference>
<dbReference type="InterPro" id="IPR018181">
    <property type="entry name" value="Heat_shock_70_CS"/>
</dbReference>
<dbReference type="InterPro" id="IPR029048">
    <property type="entry name" value="HSP70_C_sf"/>
</dbReference>
<dbReference type="InterPro" id="IPR029047">
    <property type="entry name" value="HSP70_peptide-bd_sf"/>
</dbReference>
<dbReference type="InterPro" id="IPR013126">
    <property type="entry name" value="Hsp_70_fam"/>
</dbReference>
<dbReference type="NCBIfam" id="NF001413">
    <property type="entry name" value="PRK00290.1"/>
    <property type="match status" value="1"/>
</dbReference>
<dbReference type="PANTHER" id="PTHR19375">
    <property type="entry name" value="HEAT SHOCK PROTEIN 70KDA"/>
    <property type="match status" value="1"/>
</dbReference>
<dbReference type="Pfam" id="PF00012">
    <property type="entry name" value="HSP70"/>
    <property type="match status" value="1"/>
</dbReference>
<dbReference type="PRINTS" id="PR00301">
    <property type="entry name" value="HEATSHOCK70"/>
</dbReference>
<dbReference type="SUPFAM" id="SSF53067">
    <property type="entry name" value="Actin-like ATPase domain"/>
    <property type="match status" value="2"/>
</dbReference>
<dbReference type="SUPFAM" id="SSF100934">
    <property type="entry name" value="Heat shock protein 70kD (HSP70), C-terminal subdomain"/>
    <property type="match status" value="1"/>
</dbReference>
<dbReference type="SUPFAM" id="SSF100920">
    <property type="entry name" value="Heat shock protein 70kD (HSP70), peptide-binding domain"/>
    <property type="match status" value="1"/>
</dbReference>
<dbReference type="PROSITE" id="PS00297">
    <property type="entry name" value="HSP70_1"/>
    <property type="match status" value="1"/>
</dbReference>
<dbReference type="PROSITE" id="PS00329">
    <property type="entry name" value="HSP70_2"/>
    <property type="match status" value="1"/>
</dbReference>
<dbReference type="PROSITE" id="PS01036">
    <property type="entry name" value="HSP70_3"/>
    <property type="match status" value="1"/>
</dbReference>
<comment type="function">
    <text evidence="2">Molecular chaperone implicated in a wide variety of cellular processes, including protection of the proteome from stress, folding and transport of newly synthesized polypeptides, activation of proteolysis of misfolded proteins and the formation and dissociation of protein complexes. Plays a pivotal role in the protein quality control system, ensuring the correct folding of proteins, the re-folding of misfolded proteins and controlling the targeting of proteins for subsequent degradation. This is achieved through cycles of ATP binding, ATP hydrolysis and ADP release, mediated by co-chaperones. The co-chaperones have been shown to not only regulate different steps of the ATPase cycle, but they also have an individual specificity such that one co-chaperone may promote folding of a substrate while another may promote degradation. The affinity for polypeptides is regulated by its nucleotide bound state. In the ATP-bound form, it has a low affinity for substrate proteins. However, upon hydrolysis of the ATP to ADP, it undergoes a conformational change that increases its affinity for substrate proteins. It goes through repeated cycles of ATP hydrolysis and nucleotide exchange, which permits cycles of substrate binding and release. The co-chaperones are of three types: J-domain co-chaperones such as HSP40s (stimulate ATPase hydrolysis by HSP70), the nucleotide exchange factors (NEF) such as BAG1/2/3 (facilitate conversion of HSP70 from the ADP-bound to the ATP-bound state thereby promoting substrate release), and the TPR domain chaperones such as HOPX and STUB1. Maintains protein homeostasis during cellular stress through two opposing mechanisms: protein refolding and degradation. Its acetylation/deacetylation state determines whether it functions in protein refolding or protein degradation by controlling the competitive binding of co-chaperones HOPX and STUB1. During the early stress response, the acetylated form binds to HOPX which assists in chaperone-mediated protein refolding, thereafter, it is deacetylated and binds to ubiquitin ligase STUB1 that promotes ubiquitin-mediated protein degradation. Regulates centrosome integrity during mitosis, and is required for the maintenance of a functional mitotic centrosome that supports the assembly of a bipolar mitotic spindle. Enhances STUB1-mediated SMAD3 ubiquitination and degradation and facilitates STUB1-mediated inhibition of TGF-beta signaling. Essential for STUB1-mediated ubiquitination and degradation of FOXP3 in regulatory T-cells (Treg) during inflammation.</text>
</comment>
<comment type="subunit">
    <text evidence="2">May be an auxiliary component of the CatSper complex. Identified in a IGF2BP1-dependent mRNP granule complex containing untranslated mRNAs. Interacts with CHCHD3, DNAJC7, IRAK1BP1, PPP5C and TSC2. Interacts with TERT; the interaction occurs in the absence of the RNA component, TERC, and dissociates once the TERT complex has formed. Interacts with METTL21A. Interacts with TRIM5 (via B30.2/SPRY domain). Interacts with PRKN. Interacts with FOXP3. Interacts with NOD2; the interaction enhances NOD2 stability. Interacts with DNAJC9 (via J domain). Interacts with ATF5; the interaction protects ATF5 from degradation via proteasome-dependent and caspase-dependent processes. Interacts with NAA10, HSP40, HSP90 and HDAC4. The acetylated form and the non-acetylated form interact with HOPX and STUB1 respectively. Interacts with NEDD1 and SMAD3. Interacts (via NBD) with BAG1, BAG2, BAG3 and HSPH1/HSP105. Interacts with DNAJC8.</text>
</comment>
<comment type="subcellular location">
    <subcellularLocation>
        <location evidence="2">Cytoplasm</location>
    </subcellularLocation>
    <subcellularLocation>
        <location evidence="2">Cytoplasm</location>
        <location evidence="2">Cytoskeleton</location>
        <location evidence="2">Microtubule organizing center</location>
        <location evidence="2">Centrosome</location>
    </subcellularLocation>
    <text evidence="2">Localized in cytoplasmic mRNP granules containing untranslated mRNAs.</text>
</comment>
<comment type="tissue specificity">
    <text>Testis-specific.</text>
</comment>
<comment type="induction">
    <text>By heat shock.</text>
</comment>
<comment type="domain">
    <text evidence="2">The N-terminal nucleotide binding domain (NBD) (also known as the ATPase domain) is responsible for binding and hydrolyzing ATP. The C-terminal substrate-binding domain (SBD) (also known as peptide-binding domain) binds to the client/substrate proteins. The two domains are allosterically coupled so that, when ATP is bound to the NBD, the SBD binds relatively weakly to clients. When ADP is bound in the NBD, a conformational change enhances the affinity of the SBD for client proteins.</text>
</comment>
<comment type="PTM">
    <text evidence="2">In response to cellular stress, acetylated at Lys-77 by NA110 and then gradually deacetylated by HDAC4 at later stages. Acetylation enhances its chaperone activity and also determines whether it will function as a chaperone for protein refolding or degradation by controlling its binding to co-chaperones HOPX and STUB1. The acetylated form and the non-acetylated form bind to HOPX and STUB1 respectively. Acetylation also protects cells against various types of cellular stress.</text>
</comment>
<comment type="similarity">
    <text evidence="5">Belongs to the heat shock protein 70 family.</text>
</comment>
<name>HS71B_BOVIN</name>